<accession>P26565</accession>
<accession>B7U1E9</accession>
<organism>
    <name type="scientific">Chlamydomonas reinhardtii</name>
    <name type="common">Chlamydomonas smithii</name>
    <dbReference type="NCBI Taxonomy" id="3055"/>
    <lineage>
        <taxon>Eukaryota</taxon>
        <taxon>Viridiplantae</taxon>
        <taxon>Chlorophyta</taxon>
        <taxon>core chlorophytes</taxon>
        <taxon>Chlorophyceae</taxon>
        <taxon>CS clade</taxon>
        <taxon>Chlamydomonadales</taxon>
        <taxon>Chlamydomonadaceae</taxon>
        <taxon>Chlamydomonas</taxon>
    </lineage>
</organism>
<dbReference type="EMBL" id="X62566">
    <property type="protein sequence ID" value="CAA44439.1"/>
    <property type="molecule type" value="Genomic_DNA"/>
</dbReference>
<dbReference type="EMBL" id="FJ423446">
    <property type="protein sequence ID" value="ACJ50096.1"/>
    <property type="molecule type" value="Genomic_DNA"/>
</dbReference>
<dbReference type="EMBL" id="BK000554">
    <property type="protein sequence ID" value="DAA00909.1"/>
    <property type="molecule type" value="Genomic_DNA"/>
</dbReference>
<dbReference type="PIR" id="S18026">
    <property type="entry name" value="R5KM20"/>
</dbReference>
<dbReference type="RefSeq" id="NP_958363.1">
    <property type="nucleotide sequence ID" value="NC_005353.1"/>
</dbReference>
<dbReference type="SMR" id="P26565"/>
<dbReference type="STRING" id="3055.P26565"/>
<dbReference type="PaxDb" id="3055-DAA00909"/>
<dbReference type="GeneID" id="2717012"/>
<dbReference type="KEGG" id="cre:ChreCp006"/>
<dbReference type="eggNOG" id="KOG4707">
    <property type="taxonomic scope" value="Eukaryota"/>
</dbReference>
<dbReference type="HOGENOM" id="CLU_123265_0_1_1"/>
<dbReference type="InParanoid" id="P26565"/>
<dbReference type="Proteomes" id="UP000006906">
    <property type="component" value="Chloroplast"/>
</dbReference>
<dbReference type="GO" id="GO:0009507">
    <property type="term" value="C:chloroplast"/>
    <property type="evidence" value="ECO:0007669"/>
    <property type="project" value="UniProtKB-SubCell"/>
</dbReference>
<dbReference type="GO" id="GO:1990904">
    <property type="term" value="C:ribonucleoprotein complex"/>
    <property type="evidence" value="ECO:0007669"/>
    <property type="project" value="UniProtKB-KW"/>
</dbReference>
<dbReference type="GO" id="GO:0005840">
    <property type="term" value="C:ribosome"/>
    <property type="evidence" value="ECO:0007669"/>
    <property type="project" value="UniProtKB-KW"/>
</dbReference>
<dbReference type="GO" id="GO:0019843">
    <property type="term" value="F:rRNA binding"/>
    <property type="evidence" value="ECO:0007669"/>
    <property type="project" value="UniProtKB-UniRule"/>
</dbReference>
<dbReference type="GO" id="GO:0003735">
    <property type="term" value="F:structural constituent of ribosome"/>
    <property type="evidence" value="ECO:0000318"/>
    <property type="project" value="GO_Central"/>
</dbReference>
<dbReference type="GO" id="GO:0000027">
    <property type="term" value="P:ribosomal large subunit assembly"/>
    <property type="evidence" value="ECO:0007669"/>
    <property type="project" value="UniProtKB-UniRule"/>
</dbReference>
<dbReference type="GO" id="GO:0006412">
    <property type="term" value="P:translation"/>
    <property type="evidence" value="ECO:0007669"/>
    <property type="project" value="InterPro"/>
</dbReference>
<dbReference type="CDD" id="cd07026">
    <property type="entry name" value="Ribosomal_L20"/>
    <property type="match status" value="1"/>
</dbReference>
<dbReference type="FunFam" id="1.10.1900.20:FF:000001">
    <property type="entry name" value="50S ribosomal protein L20"/>
    <property type="match status" value="1"/>
</dbReference>
<dbReference type="Gene3D" id="6.10.160.10">
    <property type="match status" value="1"/>
</dbReference>
<dbReference type="Gene3D" id="1.10.1900.20">
    <property type="entry name" value="Ribosomal protein L20"/>
    <property type="match status" value="1"/>
</dbReference>
<dbReference type="HAMAP" id="MF_00382">
    <property type="entry name" value="Ribosomal_bL20"/>
    <property type="match status" value="1"/>
</dbReference>
<dbReference type="InterPro" id="IPR005813">
    <property type="entry name" value="Ribosomal_bL20"/>
</dbReference>
<dbReference type="InterPro" id="IPR049946">
    <property type="entry name" value="RIBOSOMAL_L20_CS"/>
</dbReference>
<dbReference type="InterPro" id="IPR035566">
    <property type="entry name" value="Ribosomal_protein_bL20_C"/>
</dbReference>
<dbReference type="NCBIfam" id="TIGR01032">
    <property type="entry name" value="rplT_bact"/>
    <property type="match status" value="1"/>
</dbReference>
<dbReference type="PANTHER" id="PTHR10986">
    <property type="entry name" value="39S RIBOSOMAL PROTEIN L20"/>
    <property type="match status" value="1"/>
</dbReference>
<dbReference type="Pfam" id="PF00453">
    <property type="entry name" value="Ribosomal_L20"/>
    <property type="match status" value="1"/>
</dbReference>
<dbReference type="PRINTS" id="PR00062">
    <property type="entry name" value="RIBOSOMALL20"/>
</dbReference>
<dbReference type="SUPFAM" id="SSF74731">
    <property type="entry name" value="Ribosomal protein L20"/>
    <property type="match status" value="1"/>
</dbReference>
<dbReference type="PROSITE" id="PS00937">
    <property type="entry name" value="RIBOSOMAL_L20"/>
    <property type="match status" value="1"/>
</dbReference>
<protein>
    <recommendedName>
        <fullName evidence="2">Large ribosomal subunit protein bL20c</fullName>
    </recommendedName>
    <alternativeName>
        <fullName>50S ribosomal protein L20, chloroplastic</fullName>
    </alternativeName>
</protein>
<feature type="initiator methionine" description="Removed" evidence="1">
    <location>
        <position position="1"/>
    </location>
</feature>
<feature type="chain" id="PRO_0000177283" description="Large ribosomal subunit protein bL20c">
    <location>
        <begin position="2"/>
        <end position="112"/>
    </location>
</feature>
<sequence length="112" mass="13548">MTRVKRGNVSRKRHKKILNMSKGFRGAASTLFRTANQQNMKALRYSYRNRRQKKRDFRRMWITRVNSAVRRYGLNYSEFMNYLKTHKIQLNRKVIAQLSICDPEAFMQLLLF</sequence>
<evidence type="ECO:0000250" key="1"/>
<evidence type="ECO:0000305" key="2"/>
<proteinExistence type="inferred from homology"/>
<gene>
    <name type="primary">rpl20</name>
</gene>
<comment type="function">
    <text evidence="1">Binds directly to 23S ribosomal RNA and is necessary for the in vitro assembly process of the 50S ribosomal subunit. It is not involved in the protein synthesizing functions of that subunit (By similarity).</text>
</comment>
<comment type="subcellular location">
    <subcellularLocation>
        <location>Plastid</location>
        <location>Chloroplast</location>
    </subcellularLocation>
</comment>
<comment type="similarity">
    <text evidence="2">Belongs to the bacterial ribosomal protein bL20 family.</text>
</comment>
<geneLocation type="chloroplast"/>
<reference key="1">
    <citation type="journal article" date="1992" name="Plant Physiol.">
        <title>Sequences of the Chlamydomonas reinhardtii chloroplast genes encoding tRNA Ser and ribosomal protein L20.</title>
        <authorList>
            <person name="Yu W."/>
            <person name="Zhang D."/>
            <person name="Spreitzer R.J."/>
        </authorList>
    </citation>
    <scope>NUCLEOTIDE SEQUENCE [GENOMIC DNA]</scope>
    <source>
        <strain>2137</strain>
    </source>
</reference>
<reference key="2">
    <citation type="journal article" date="2009" name="BMC Evol. Biol.">
        <title>Nucleotide diversity of the Chlamydomonas reinhardtii plastid genome: addressing the mutational-hazard hypothesis.</title>
        <authorList>
            <person name="Smith D.R."/>
            <person name="Lee R.W."/>
        </authorList>
    </citation>
    <scope>NUCLEOTIDE SEQUENCE [LARGE SCALE GENOMIC DNA]</scope>
    <source>
        <strain>CC-503</strain>
    </source>
</reference>
<reference key="3">
    <citation type="journal article" date="2002" name="Plant Cell">
        <title>The Chlamydomonas reinhardtii plastid chromosome: islands of genes in a sea of repeats.</title>
        <authorList>
            <person name="Maul J.E."/>
            <person name="Lilly J.W."/>
            <person name="Cui L."/>
            <person name="dePamphilis C.W."/>
            <person name="Miller W."/>
            <person name="Harris E.H."/>
            <person name="Stern D.B."/>
        </authorList>
    </citation>
    <scope>IDENTIFICATION</scope>
    <scope>COMPLETE PLASTID GENOME</scope>
</reference>
<keyword id="KW-0150">Chloroplast</keyword>
<keyword id="KW-0934">Plastid</keyword>
<keyword id="KW-1185">Reference proteome</keyword>
<keyword id="KW-0687">Ribonucleoprotein</keyword>
<keyword id="KW-0689">Ribosomal protein</keyword>
<keyword id="KW-0694">RNA-binding</keyword>
<keyword id="KW-0699">rRNA-binding</keyword>
<name>RK20_CHLRE</name>